<keyword id="KW-0030">Aminoacyl-tRNA synthetase</keyword>
<keyword id="KW-0067">ATP-binding</keyword>
<keyword id="KW-0963">Cytoplasm</keyword>
<keyword id="KW-0436">Ligase</keyword>
<keyword id="KW-0479">Metal-binding</keyword>
<keyword id="KW-0547">Nucleotide-binding</keyword>
<keyword id="KW-0648">Protein biosynthesis</keyword>
<keyword id="KW-0862">Zinc</keyword>
<dbReference type="EC" id="6.1.1.16" evidence="1"/>
<dbReference type="EMBL" id="CP000753">
    <property type="protein sequence ID" value="ABS07737.1"/>
    <property type="molecule type" value="Genomic_DNA"/>
</dbReference>
<dbReference type="RefSeq" id="WP_006081121.1">
    <property type="nucleotide sequence ID" value="NC_009665.1"/>
</dbReference>
<dbReference type="SMR" id="A6WLP8"/>
<dbReference type="KEGG" id="sbm:Shew185_1590"/>
<dbReference type="HOGENOM" id="CLU_013528_0_1_6"/>
<dbReference type="GO" id="GO:0005829">
    <property type="term" value="C:cytosol"/>
    <property type="evidence" value="ECO:0007669"/>
    <property type="project" value="TreeGrafter"/>
</dbReference>
<dbReference type="GO" id="GO:0005524">
    <property type="term" value="F:ATP binding"/>
    <property type="evidence" value="ECO:0007669"/>
    <property type="project" value="UniProtKB-UniRule"/>
</dbReference>
<dbReference type="GO" id="GO:0004817">
    <property type="term" value="F:cysteine-tRNA ligase activity"/>
    <property type="evidence" value="ECO:0007669"/>
    <property type="project" value="UniProtKB-UniRule"/>
</dbReference>
<dbReference type="GO" id="GO:0008270">
    <property type="term" value="F:zinc ion binding"/>
    <property type="evidence" value="ECO:0007669"/>
    <property type="project" value="UniProtKB-UniRule"/>
</dbReference>
<dbReference type="GO" id="GO:0006423">
    <property type="term" value="P:cysteinyl-tRNA aminoacylation"/>
    <property type="evidence" value="ECO:0007669"/>
    <property type="project" value="UniProtKB-UniRule"/>
</dbReference>
<dbReference type="CDD" id="cd07963">
    <property type="entry name" value="Anticodon_Ia_Cys"/>
    <property type="match status" value="1"/>
</dbReference>
<dbReference type="CDD" id="cd00672">
    <property type="entry name" value="CysRS_core"/>
    <property type="match status" value="1"/>
</dbReference>
<dbReference type="FunFam" id="1.20.120.1910:FF:000001">
    <property type="entry name" value="Cysteine--tRNA ligase"/>
    <property type="match status" value="1"/>
</dbReference>
<dbReference type="FunFam" id="3.40.50.620:FF:000009">
    <property type="entry name" value="Cysteine--tRNA ligase"/>
    <property type="match status" value="1"/>
</dbReference>
<dbReference type="Gene3D" id="1.20.120.1910">
    <property type="entry name" value="Cysteine-tRNA ligase, C-terminal anti-codon recognition domain"/>
    <property type="match status" value="1"/>
</dbReference>
<dbReference type="Gene3D" id="3.40.50.620">
    <property type="entry name" value="HUPs"/>
    <property type="match status" value="1"/>
</dbReference>
<dbReference type="HAMAP" id="MF_00041">
    <property type="entry name" value="Cys_tRNA_synth"/>
    <property type="match status" value="1"/>
</dbReference>
<dbReference type="InterPro" id="IPR015803">
    <property type="entry name" value="Cys-tRNA-ligase"/>
</dbReference>
<dbReference type="InterPro" id="IPR015273">
    <property type="entry name" value="Cys-tRNA-synt_Ia_DALR"/>
</dbReference>
<dbReference type="InterPro" id="IPR024909">
    <property type="entry name" value="Cys-tRNA/MSH_ligase"/>
</dbReference>
<dbReference type="InterPro" id="IPR056411">
    <property type="entry name" value="CysS_C"/>
</dbReference>
<dbReference type="InterPro" id="IPR014729">
    <property type="entry name" value="Rossmann-like_a/b/a_fold"/>
</dbReference>
<dbReference type="InterPro" id="IPR032678">
    <property type="entry name" value="tRNA-synt_1_cat_dom"/>
</dbReference>
<dbReference type="InterPro" id="IPR009080">
    <property type="entry name" value="tRNAsynth_Ia_anticodon-bd"/>
</dbReference>
<dbReference type="NCBIfam" id="TIGR00435">
    <property type="entry name" value="cysS"/>
    <property type="match status" value="1"/>
</dbReference>
<dbReference type="PANTHER" id="PTHR10890:SF3">
    <property type="entry name" value="CYSTEINE--TRNA LIGASE, CYTOPLASMIC"/>
    <property type="match status" value="1"/>
</dbReference>
<dbReference type="PANTHER" id="PTHR10890">
    <property type="entry name" value="CYSTEINYL-TRNA SYNTHETASE"/>
    <property type="match status" value="1"/>
</dbReference>
<dbReference type="Pfam" id="PF23493">
    <property type="entry name" value="CysS_C"/>
    <property type="match status" value="1"/>
</dbReference>
<dbReference type="Pfam" id="PF09190">
    <property type="entry name" value="DALR_2"/>
    <property type="match status" value="1"/>
</dbReference>
<dbReference type="Pfam" id="PF01406">
    <property type="entry name" value="tRNA-synt_1e"/>
    <property type="match status" value="1"/>
</dbReference>
<dbReference type="PRINTS" id="PR00983">
    <property type="entry name" value="TRNASYNTHCYS"/>
</dbReference>
<dbReference type="SMART" id="SM00840">
    <property type="entry name" value="DALR_2"/>
    <property type="match status" value="1"/>
</dbReference>
<dbReference type="SUPFAM" id="SSF47323">
    <property type="entry name" value="Anticodon-binding domain of a subclass of class I aminoacyl-tRNA synthetases"/>
    <property type="match status" value="1"/>
</dbReference>
<dbReference type="SUPFAM" id="SSF52374">
    <property type="entry name" value="Nucleotidylyl transferase"/>
    <property type="match status" value="1"/>
</dbReference>
<proteinExistence type="inferred from homology"/>
<gene>
    <name evidence="1" type="primary">cysS</name>
    <name type="ordered locus">Shew185_1590</name>
</gene>
<evidence type="ECO:0000255" key="1">
    <source>
        <dbReference type="HAMAP-Rule" id="MF_00041"/>
    </source>
</evidence>
<organism>
    <name type="scientific">Shewanella baltica (strain OS185)</name>
    <dbReference type="NCBI Taxonomy" id="402882"/>
    <lineage>
        <taxon>Bacteria</taxon>
        <taxon>Pseudomonadati</taxon>
        <taxon>Pseudomonadota</taxon>
        <taxon>Gammaproteobacteria</taxon>
        <taxon>Alteromonadales</taxon>
        <taxon>Shewanellaceae</taxon>
        <taxon>Shewanella</taxon>
    </lineage>
</organism>
<accession>A6WLP8</accession>
<name>SYC_SHEB8</name>
<reference key="1">
    <citation type="submission" date="2007-07" db="EMBL/GenBank/DDBJ databases">
        <title>Complete sequence of chromosome of Shewanella baltica OS185.</title>
        <authorList>
            <consortium name="US DOE Joint Genome Institute"/>
            <person name="Copeland A."/>
            <person name="Lucas S."/>
            <person name="Lapidus A."/>
            <person name="Barry K."/>
            <person name="Glavina del Rio T."/>
            <person name="Dalin E."/>
            <person name="Tice H."/>
            <person name="Pitluck S."/>
            <person name="Sims D."/>
            <person name="Brettin T."/>
            <person name="Bruce D."/>
            <person name="Detter J.C."/>
            <person name="Han C."/>
            <person name="Schmutz J."/>
            <person name="Larimer F."/>
            <person name="Land M."/>
            <person name="Hauser L."/>
            <person name="Kyrpides N."/>
            <person name="Mikhailova N."/>
            <person name="Brettar I."/>
            <person name="Rodrigues J."/>
            <person name="Konstantinidis K."/>
            <person name="Tiedje J."/>
            <person name="Richardson P."/>
        </authorList>
    </citation>
    <scope>NUCLEOTIDE SEQUENCE [LARGE SCALE GENOMIC DNA]</scope>
    <source>
        <strain>OS185</strain>
    </source>
</reference>
<protein>
    <recommendedName>
        <fullName evidence="1">Cysteine--tRNA ligase</fullName>
        <ecNumber evidence="1">6.1.1.16</ecNumber>
    </recommendedName>
    <alternativeName>
        <fullName evidence="1">Cysteinyl-tRNA synthetase</fullName>
        <shortName evidence="1">CysRS</shortName>
    </alternativeName>
</protein>
<feature type="chain" id="PRO_0000332899" description="Cysteine--tRNA ligase">
    <location>
        <begin position="1"/>
        <end position="459"/>
    </location>
</feature>
<feature type="short sequence motif" description="'HIGH' region">
    <location>
        <begin position="30"/>
        <end position="40"/>
    </location>
</feature>
<feature type="short sequence motif" description="'KMSKS' region">
    <location>
        <begin position="266"/>
        <end position="270"/>
    </location>
</feature>
<feature type="binding site" evidence="1">
    <location>
        <position position="28"/>
    </location>
    <ligand>
        <name>Zn(2+)</name>
        <dbReference type="ChEBI" id="CHEBI:29105"/>
    </ligand>
</feature>
<feature type="binding site" evidence="1">
    <location>
        <position position="209"/>
    </location>
    <ligand>
        <name>Zn(2+)</name>
        <dbReference type="ChEBI" id="CHEBI:29105"/>
    </ligand>
</feature>
<feature type="binding site" evidence="1">
    <location>
        <position position="234"/>
    </location>
    <ligand>
        <name>Zn(2+)</name>
        <dbReference type="ChEBI" id="CHEBI:29105"/>
    </ligand>
</feature>
<feature type="binding site" evidence="1">
    <location>
        <position position="238"/>
    </location>
    <ligand>
        <name>Zn(2+)</name>
        <dbReference type="ChEBI" id="CHEBI:29105"/>
    </ligand>
</feature>
<feature type="binding site" evidence="1">
    <location>
        <position position="269"/>
    </location>
    <ligand>
        <name>ATP</name>
        <dbReference type="ChEBI" id="CHEBI:30616"/>
    </ligand>
</feature>
<comment type="catalytic activity">
    <reaction evidence="1">
        <text>tRNA(Cys) + L-cysteine + ATP = L-cysteinyl-tRNA(Cys) + AMP + diphosphate</text>
        <dbReference type="Rhea" id="RHEA:17773"/>
        <dbReference type="Rhea" id="RHEA-COMP:9661"/>
        <dbReference type="Rhea" id="RHEA-COMP:9679"/>
        <dbReference type="ChEBI" id="CHEBI:30616"/>
        <dbReference type="ChEBI" id="CHEBI:33019"/>
        <dbReference type="ChEBI" id="CHEBI:35235"/>
        <dbReference type="ChEBI" id="CHEBI:78442"/>
        <dbReference type="ChEBI" id="CHEBI:78517"/>
        <dbReference type="ChEBI" id="CHEBI:456215"/>
        <dbReference type="EC" id="6.1.1.16"/>
    </reaction>
</comment>
<comment type="cofactor">
    <cofactor evidence="1">
        <name>Zn(2+)</name>
        <dbReference type="ChEBI" id="CHEBI:29105"/>
    </cofactor>
    <text evidence="1">Binds 1 zinc ion per subunit.</text>
</comment>
<comment type="subunit">
    <text evidence="1">Monomer.</text>
</comment>
<comment type="subcellular location">
    <subcellularLocation>
        <location evidence="1">Cytoplasm</location>
    </subcellularLocation>
</comment>
<comment type="similarity">
    <text evidence="1">Belongs to the class-I aminoacyl-tRNA synthetase family.</text>
</comment>
<sequence>MLKIYNSITRQKQEFKPITPGKIGMYVCGVTIYDLCHIGHGRTFVSFDMIVRYLRYAGYEVNFQRNITDVDDKIIKRANENNESCEALTERLIGEMHQDFDALNMLRPDFEPRATLHIAEIIDMVELLLARGHAYVASDGDVLFSVASYPDYGRLSGQNLDQLQAGARVEVDETKQNPMDFVLWKMSKPGEPTWESPWGPGRPGWHIECSAMNSKHLGLHFDIHGGGSDLQFPHHENEIAQSCCAHDTPYVNYWMHTGMVMVDREKMSKSLGNFFTIRDVLGHYDAETVRYFLLSGHYRSQLNYSEDNLKQARSALERLYTAIKDVDLTVAAAPAEEFVAKFKAAMDDDFNTPEAYSVLFDMVREINRLKLTDMAQASALAVTLKQLADVLGLLSQEPEAFFQGGGSDDEVAEIEALIVERNRARTEKDWAAADVARNRLNELGVELEDGPSGTTWRKK</sequence>